<name>PUR7_PSEP7</name>
<proteinExistence type="inferred from homology"/>
<evidence type="ECO:0000255" key="1">
    <source>
        <dbReference type="HAMAP-Rule" id="MF_00137"/>
    </source>
</evidence>
<gene>
    <name evidence="1" type="primary">purC</name>
    <name type="ordered locus">PSPA7_4384</name>
</gene>
<feature type="chain" id="PRO_1000018755" description="Phosphoribosylaminoimidazole-succinocarboxamide synthase">
    <location>
        <begin position="1"/>
        <end position="236"/>
    </location>
</feature>
<sequence length="236" mass="26902">MEKREELYRGKAKSVYRTDDADRLILLFRNDTSAFDGKRIEQLDRKGAVNNKFNAFIMQKLEAAGIPTQFDTLLSDTECLVKKLDMIPVECVVRNFAAGSLVRRLGVEEGIALTPPTFELFLKNDALGDPFINESHVQAFGWATPEQLAQMKTYSFKVNEVLNKLFEEAGLLLVDFKLEFGLFHGQIVLGDEFSPDGCRLWDKETRKKMDKDRFRQGLGEVIEAYEEVARRLGVPL</sequence>
<dbReference type="EC" id="6.3.2.6" evidence="1"/>
<dbReference type="EMBL" id="CP000744">
    <property type="protein sequence ID" value="ABR82308.1"/>
    <property type="molecule type" value="Genomic_DNA"/>
</dbReference>
<dbReference type="RefSeq" id="WP_003153039.1">
    <property type="nucleotide sequence ID" value="NC_009656.1"/>
</dbReference>
<dbReference type="SMR" id="A6V9K1"/>
<dbReference type="KEGG" id="pap:PSPA7_4384"/>
<dbReference type="HOGENOM" id="CLU_061495_2_0_6"/>
<dbReference type="UniPathway" id="UPA00074">
    <property type="reaction ID" value="UER00131"/>
</dbReference>
<dbReference type="Proteomes" id="UP000001582">
    <property type="component" value="Chromosome"/>
</dbReference>
<dbReference type="GO" id="GO:0005829">
    <property type="term" value="C:cytosol"/>
    <property type="evidence" value="ECO:0007669"/>
    <property type="project" value="TreeGrafter"/>
</dbReference>
<dbReference type="GO" id="GO:0005524">
    <property type="term" value="F:ATP binding"/>
    <property type="evidence" value="ECO:0007669"/>
    <property type="project" value="UniProtKB-KW"/>
</dbReference>
<dbReference type="GO" id="GO:0004639">
    <property type="term" value="F:phosphoribosylaminoimidazolesuccinocarboxamide synthase activity"/>
    <property type="evidence" value="ECO:0007669"/>
    <property type="project" value="UniProtKB-UniRule"/>
</dbReference>
<dbReference type="GO" id="GO:0006189">
    <property type="term" value="P:'de novo' IMP biosynthetic process"/>
    <property type="evidence" value="ECO:0007669"/>
    <property type="project" value="UniProtKB-UniRule"/>
</dbReference>
<dbReference type="GO" id="GO:0009236">
    <property type="term" value="P:cobalamin biosynthetic process"/>
    <property type="evidence" value="ECO:0007669"/>
    <property type="project" value="InterPro"/>
</dbReference>
<dbReference type="CDD" id="cd01415">
    <property type="entry name" value="SAICAR_synt_PurC"/>
    <property type="match status" value="1"/>
</dbReference>
<dbReference type="FunFam" id="3.30.200.20:FF:000086">
    <property type="entry name" value="Phosphoribosylaminoimidazole-succinocarboxamide synthase"/>
    <property type="match status" value="1"/>
</dbReference>
<dbReference type="FunFam" id="3.30.470.20:FF:000006">
    <property type="entry name" value="Phosphoribosylaminoimidazole-succinocarboxamide synthase"/>
    <property type="match status" value="1"/>
</dbReference>
<dbReference type="Gene3D" id="3.30.470.20">
    <property type="entry name" value="ATP-grasp fold, B domain"/>
    <property type="match status" value="1"/>
</dbReference>
<dbReference type="Gene3D" id="3.30.200.20">
    <property type="entry name" value="Phosphorylase Kinase, domain 1"/>
    <property type="match status" value="1"/>
</dbReference>
<dbReference type="HAMAP" id="MF_00137">
    <property type="entry name" value="SAICAR_synth"/>
    <property type="match status" value="1"/>
</dbReference>
<dbReference type="InterPro" id="IPR028923">
    <property type="entry name" value="SAICAR_synt/ADE2_N"/>
</dbReference>
<dbReference type="InterPro" id="IPR033934">
    <property type="entry name" value="SAICAR_synt_PurC"/>
</dbReference>
<dbReference type="InterPro" id="IPR001636">
    <property type="entry name" value="SAICAR_synth"/>
</dbReference>
<dbReference type="InterPro" id="IPR050089">
    <property type="entry name" value="SAICAR_synthetase"/>
</dbReference>
<dbReference type="InterPro" id="IPR018236">
    <property type="entry name" value="SAICAR_synthetase_CS"/>
</dbReference>
<dbReference type="NCBIfam" id="TIGR00081">
    <property type="entry name" value="purC"/>
    <property type="match status" value="1"/>
</dbReference>
<dbReference type="PANTHER" id="PTHR43599">
    <property type="entry name" value="MULTIFUNCTIONAL PROTEIN ADE2"/>
    <property type="match status" value="1"/>
</dbReference>
<dbReference type="PANTHER" id="PTHR43599:SF3">
    <property type="entry name" value="SI:DKEY-6E2.2"/>
    <property type="match status" value="1"/>
</dbReference>
<dbReference type="Pfam" id="PF01259">
    <property type="entry name" value="SAICAR_synt"/>
    <property type="match status" value="1"/>
</dbReference>
<dbReference type="SUPFAM" id="SSF56104">
    <property type="entry name" value="SAICAR synthase-like"/>
    <property type="match status" value="1"/>
</dbReference>
<dbReference type="PROSITE" id="PS01057">
    <property type="entry name" value="SAICAR_SYNTHETASE_1"/>
    <property type="match status" value="1"/>
</dbReference>
<dbReference type="PROSITE" id="PS01058">
    <property type="entry name" value="SAICAR_SYNTHETASE_2"/>
    <property type="match status" value="1"/>
</dbReference>
<accession>A6V9K1</accession>
<reference key="1">
    <citation type="submission" date="2007-06" db="EMBL/GenBank/DDBJ databases">
        <authorList>
            <person name="Dodson R.J."/>
            <person name="Harkins D."/>
            <person name="Paulsen I.T."/>
        </authorList>
    </citation>
    <scope>NUCLEOTIDE SEQUENCE [LARGE SCALE GENOMIC DNA]</scope>
    <source>
        <strain>DSM 24068 / PA7</strain>
    </source>
</reference>
<keyword id="KW-0067">ATP-binding</keyword>
<keyword id="KW-0436">Ligase</keyword>
<keyword id="KW-0547">Nucleotide-binding</keyword>
<keyword id="KW-0658">Purine biosynthesis</keyword>
<organism>
    <name type="scientific">Pseudomonas paraeruginosa (strain DSM 24068 / PA7)</name>
    <name type="common">Pseudomonas aeruginosa (strain PA7)</name>
    <dbReference type="NCBI Taxonomy" id="381754"/>
    <lineage>
        <taxon>Bacteria</taxon>
        <taxon>Pseudomonadati</taxon>
        <taxon>Pseudomonadota</taxon>
        <taxon>Gammaproteobacteria</taxon>
        <taxon>Pseudomonadales</taxon>
        <taxon>Pseudomonadaceae</taxon>
        <taxon>Pseudomonas</taxon>
        <taxon>Pseudomonas paraeruginosa</taxon>
    </lineage>
</organism>
<comment type="catalytic activity">
    <reaction evidence="1">
        <text>5-amino-1-(5-phospho-D-ribosyl)imidazole-4-carboxylate + L-aspartate + ATP = (2S)-2-[5-amino-1-(5-phospho-beta-D-ribosyl)imidazole-4-carboxamido]succinate + ADP + phosphate + 2 H(+)</text>
        <dbReference type="Rhea" id="RHEA:22628"/>
        <dbReference type="ChEBI" id="CHEBI:15378"/>
        <dbReference type="ChEBI" id="CHEBI:29991"/>
        <dbReference type="ChEBI" id="CHEBI:30616"/>
        <dbReference type="ChEBI" id="CHEBI:43474"/>
        <dbReference type="ChEBI" id="CHEBI:58443"/>
        <dbReference type="ChEBI" id="CHEBI:77657"/>
        <dbReference type="ChEBI" id="CHEBI:456216"/>
        <dbReference type="EC" id="6.3.2.6"/>
    </reaction>
</comment>
<comment type="pathway">
    <text evidence="1">Purine metabolism; IMP biosynthesis via de novo pathway; 5-amino-1-(5-phospho-D-ribosyl)imidazole-4-carboxamide from 5-amino-1-(5-phospho-D-ribosyl)imidazole-4-carboxylate: step 1/2.</text>
</comment>
<comment type="similarity">
    <text evidence="1">Belongs to the SAICAR synthetase family.</text>
</comment>
<protein>
    <recommendedName>
        <fullName evidence="1">Phosphoribosylaminoimidazole-succinocarboxamide synthase</fullName>
        <ecNumber evidence="1">6.3.2.6</ecNumber>
    </recommendedName>
    <alternativeName>
        <fullName evidence="1">SAICAR synthetase</fullName>
    </alternativeName>
</protein>